<sequence>MSNATKFGKVAVLLGGKSAERAVSLDSGQAVLDALLRSGVQAEAFDPQNRSVTELVNYDRAFIVLHGRGGEDGQIQGVLEWLNIPYTGTGVQGSAIGMDKVKTKQIWQGSDLPTAPYRIITKETDLDSVIAELGLPVIIKPVHEGSSVGMSKVEKAEDFAAAIEKATQHDAVVMAEKWITGREFTISFLNGQPLPVIRLQPPADVAFYDYEAKYQRNDVEYGIPCGLSETEEKKLQALCLRAFQAVGAEGWGRIDAMQDEQGNFWLLEVNTVPGMTSHSLVPKAAKAVGYSFDELCVAILDQTLEGTA</sequence>
<proteinExistence type="inferred from homology"/>
<keyword id="KW-0067">ATP-binding</keyword>
<keyword id="KW-0133">Cell shape</keyword>
<keyword id="KW-0961">Cell wall biogenesis/degradation</keyword>
<keyword id="KW-0963">Cytoplasm</keyword>
<keyword id="KW-0436">Ligase</keyword>
<keyword id="KW-0460">Magnesium</keyword>
<keyword id="KW-0464">Manganese</keyword>
<keyword id="KW-0479">Metal-binding</keyword>
<keyword id="KW-0547">Nucleotide-binding</keyword>
<keyword id="KW-0573">Peptidoglycan synthesis</keyword>
<gene>
    <name evidence="2" type="primary">ddl</name>
    <name type="ordered locus">AB57_3785</name>
</gene>
<organism>
    <name type="scientific">Acinetobacter baumannii (strain AB0057)</name>
    <dbReference type="NCBI Taxonomy" id="480119"/>
    <lineage>
        <taxon>Bacteria</taxon>
        <taxon>Pseudomonadati</taxon>
        <taxon>Pseudomonadota</taxon>
        <taxon>Gammaproteobacteria</taxon>
        <taxon>Moraxellales</taxon>
        <taxon>Moraxellaceae</taxon>
        <taxon>Acinetobacter</taxon>
        <taxon>Acinetobacter calcoaceticus/baumannii complex</taxon>
    </lineage>
</organism>
<feature type="chain" id="PRO_1000116632" description="D-alanine--D-alanine ligase">
    <location>
        <begin position="1"/>
        <end position="308"/>
    </location>
</feature>
<feature type="domain" description="ATP-grasp" evidence="2">
    <location>
        <begin position="104"/>
        <end position="301"/>
    </location>
</feature>
<feature type="binding site" evidence="2">
    <location>
        <begin position="130"/>
        <end position="185"/>
    </location>
    <ligand>
        <name>ATP</name>
        <dbReference type="ChEBI" id="CHEBI:30616"/>
    </ligand>
</feature>
<feature type="binding site" evidence="2">
    <location>
        <position position="255"/>
    </location>
    <ligand>
        <name>Mg(2+)</name>
        <dbReference type="ChEBI" id="CHEBI:18420"/>
        <label>1</label>
    </ligand>
</feature>
<feature type="binding site" evidence="2">
    <location>
        <position position="268"/>
    </location>
    <ligand>
        <name>Mg(2+)</name>
        <dbReference type="ChEBI" id="CHEBI:18420"/>
        <label>1</label>
    </ligand>
</feature>
<feature type="binding site" evidence="2">
    <location>
        <position position="268"/>
    </location>
    <ligand>
        <name>Mg(2+)</name>
        <dbReference type="ChEBI" id="CHEBI:18420"/>
        <label>2</label>
    </ligand>
</feature>
<feature type="binding site" evidence="2">
    <location>
        <position position="270"/>
    </location>
    <ligand>
        <name>Mg(2+)</name>
        <dbReference type="ChEBI" id="CHEBI:18420"/>
        <label>2</label>
    </ligand>
</feature>
<protein>
    <recommendedName>
        <fullName evidence="2">D-alanine--D-alanine ligase</fullName>
        <ecNumber evidence="2">6.3.2.4</ecNumber>
    </recommendedName>
    <alternativeName>
        <fullName evidence="2">D-Ala-D-Ala ligase</fullName>
    </alternativeName>
    <alternativeName>
        <fullName evidence="2">D-alanylalanine synthetase</fullName>
    </alternativeName>
</protein>
<name>DDL_ACIB5</name>
<reference key="1">
    <citation type="journal article" date="2008" name="J. Bacteriol.">
        <title>Comparative genome sequence analysis of multidrug-resistant Acinetobacter baumannii.</title>
        <authorList>
            <person name="Adams M.D."/>
            <person name="Goglin K."/>
            <person name="Molyneaux N."/>
            <person name="Hujer K.M."/>
            <person name="Lavender H."/>
            <person name="Jamison J.J."/>
            <person name="MacDonald I.J."/>
            <person name="Martin K.M."/>
            <person name="Russo T."/>
            <person name="Campagnari A.A."/>
            <person name="Hujer A.M."/>
            <person name="Bonomo R.A."/>
            <person name="Gill S.R."/>
        </authorList>
    </citation>
    <scope>NUCLEOTIDE SEQUENCE [LARGE SCALE GENOMIC DNA]</scope>
    <source>
        <strain>AB0057</strain>
    </source>
</reference>
<evidence type="ECO:0000250" key="1"/>
<evidence type="ECO:0000255" key="2">
    <source>
        <dbReference type="HAMAP-Rule" id="MF_00047"/>
    </source>
</evidence>
<comment type="function">
    <text evidence="2">Cell wall formation.</text>
</comment>
<comment type="catalytic activity">
    <reaction evidence="2">
        <text>2 D-alanine + ATP = D-alanyl-D-alanine + ADP + phosphate + H(+)</text>
        <dbReference type="Rhea" id="RHEA:11224"/>
        <dbReference type="ChEBI" id="CHEBI:15378"/>
        <dbReference type="ChEBI" id="CHEBI:30616"/>
        <dbReference type="ChEBI" id="CHEBI:43474"/>
        <dbReference type="ChEBI" id="CHEBI:57416"/>
        <dbReference type="ChEBI" id="CHEBI:57822"/>
        <dbReference type="ChEBI" id="CHEBI:456216"/>
        <dbReference type="EC" id="6.3.2.4"/>
    </reaction>
</comment>
<comment type="cofactor">
    <cofactor evidence="1">
        <name>Mg(2+)</name>
        <dbReference type="ChEBI" id="CHEBI:18420"/>
    </cofactor>
    <cofactor evidence="1">
        <name>Mn(2+)</name>
        <dbReference type="ChEBI" id="CHEBI:29035"/>
    </cofactor>
    <text evidence="1">Binds 2 magnesium or manganese ions per subunit.</text>
</comment>
<comment type="pathway">
    <text evidence="2">Cell wall biogenesis; peptidoglycan biosynthesis.</text>
</comment>
<comment type="subcellular location">
    <subcellularLocation>
        <location evidence="2">Cytoplasm</location>
    </subcellularLocation>
</comment>
<comment type="similarity">
    <text evidence="2">Belongs to the D-alanine--D-alanine ligase family.</text>
</comment>
<accession>B7ICE3</accession>
<dbReference type="EC" id="6.3.2.4" evidence="2"/>
<dbReference type="EMBL" id="CP001182">
    <property type="protein sequence ID" value="ACJ43137.1"/>
    <property type="molecule type" value="Genomic_DNA"/>
</dbReference>
<dbReference type="RefSeq" id="WP_000063665.1">
    <property type="nucleotide sequence ID" value="NC_011586.2"/>
</dbReference>
<dbReference type="SMR" id="B7ICE3"/>
<dbReference type="KEGG" id="abn:AB57_3785"/>
<dbReference type="HOGENOM" id="CLU_039268_1_2_6"/>
<dbReference type="UniPathway" id="UPA00219"/>
<dbReference type="Proteomes" id="UP000007094">
    <property type="component" value="Chromosome"/>
</dbReference>
<dbReference type="GO" id="GO:0005829">
    <property type="term" value="C:cytosol"/>
    <property type="evidence" value="ECO:0007669"/>
    <property type="project" value="TreeGrafter"/>
</dbReference>
<dbReference type="GO" id="GO:0005524">
    <property type="term" value="F:ATP binding"/>
    <property type="evidence" value="ECO:0007669"/>
    <property type="project" value="UniProtKB-KW"/>
</dbReference>
<dbReference type="GO" id="GO:0008716">
    <property type="term" value="F:D-alanine-D-alanine ligase activity"/>
    <property type="evidence" value="ECO:0007669"/>
    <property type="project" value="UniProtKB-UniRule"/>
</dbReference>
<dbReference type="GO" id="GO:0046872">
    <property type="term" value="F:metal ion binding"/>
    <property type="evidence" value="ECO:0007669"/>
    <property type="project" value="UniProtKB-KW"/>
</dbReference>
<dbReference type="GO" id="GO:0071555">
    <property type="term" value="P:cell wall organization"/>
    <property type="evidence" value="ECO:0007669"/>
    <property type="project" value="UniProtKB-KW"/>
</dbReference>
<dbReference type="GO" id="GO:0009252">
    <property type="term" value="P:peptidoglycan biosynthetic process"/>
    <property type="evidence" value="ECO:0007669"/>
    <property type="project" value="UniProtKB-UniRule"/>
</dbReference>
<dbReference type="GO" id="GO:0008360">
    <property type="term" value="P:regulation of cell shape"/>
    <property type="evidence" value="ECO:0007669"/>
    <property type="project" value="UniProtKB-KW"/>
</dbReference>
<dbReference type="FunFam" id="3.30.1490.20:FF:000007">
    <property type="entry name" value="D-alanine--D-alanine ligase"/>
    <property type="match status" value="1"/>
</dbReference>
<dbReference type="FunFam" id="3.30.470.20:FF:000008">
    <property type="entry name" value="D-alanine--D-alanine ligase"/>
    <property type="match status" value="1"/>
</dbReference>
<dbReference type="Gene3D" id="3.40.50.20">
    <property type="match status" value="1"/>
</dbReference>
<dbReference type="Gene3D" id="3.30.470.20">
    <property type="entry name" value="ATP-grasp fold, B domain"/>
    <property type="match status" value="1"/>
</dbReference>
<dbReference type="HAMAP" id="MF_00047">
    <property type="entry name" value="Dala_Dala_lig"/>
    <property type="match status" value="1"/>
</dbReference>
<dbReference type="InterPro" id="IPR011761">
    <property type="entry name" value="ATP-grasp"/>
</dbReference>
<dbReference type="InterPro" id="IPR000291">
    <property type="entry name" value="D-Ala_lig_Van_CS"/>
</dbReference>
<dbReference type="InterPro" id="IPR005905">
    <property type="entry name" value="D_ala_D_ala"/>
</dbReference>
<dbReference type="InterPro" id="IPR011095">
    <property type="entry name" value="Dala_Dala_lig_C"/>
</dbReference>
<dbReference type="InterPro" id="IPR011127">
    <property type="entry name" value="Dala_Dala_lig_N"/>
</dbReference>
<dbReference type="InterPro" id="IPR016185">
    <property type="entry name" value="PreATP-grasp_dom_sf"/>
</dbReference>
<dbReference type="NCBIfam" id="TIGR01205">
    <property type="entry name" value="D_ala_D_alaTIGR"/>
    <property type="match status" value="1"/>
</dbReference>
<dbReference type="NCBIfam" id="NF002378">
    <property type="entry name" value="PRK01372.1"/>
    <property type="match status" value="1"/>
</dbReference>
<dbReference type="PANTHER" id="PTHR23132">
    <property type="entry name" value="D-ALANINE--D-ALANINE LIGASE"/>
    <property type="match status" value="1"/>
</dbReference>
<dbReference type="PANTHER" id="PTHR23132:SF23">
    <property type="entry name" value="D-ALANINE--D-ALANINE LIGASE B"/>
    <property type="match status" value="1"/>
</dbReference>
<dbReference type="Pfam" id="PF07478">
    <property type="entry name" value="Dala_Dala_lig_C"/>
    <property type="match status" value="1"/>
</dbReference>
<dbReference type="Pfam" id="PF01820">
    <property type="entry name" value="Dala_Dala_lig_N"/>
    <property type="match status" value="1"/>
</dbReference>
<dbReference type="PIRSF" id="PIRSF039102">
    <property type="entry name" value="Ddl/VanB"/>
    <property type="match status" value="1"/>
</dbReference>
<dbReference type="SUPFAM" id="SSF56059">
    <property type="entry name" value="Glutathione synthetase ATP-binding domain-like"/>
    <property type="match status" value="1"/>
</dbReference>
<dbReference type="SUPFAM" id="SSF52440">
    <property type="entry name" value="PreATP-grasp domain"/>
    <property type="match status" value="1"/>
</dbReference>
<dbReference type="PROSITE" id="PS50975">
    <property type="entry name" value="ATP_GRASP"/>
    <property type="match status" value="1"/>
</dbReference>
<dbReference type="PROSITE" id="PS00843">
    <property type="entry name" value="DALA_DALA_LIGASE_1"/>
    <property type="match status" value="1"/>
</dbReference>
<dbReference type="PROSITE" id="PS00844">
    <property type="entry name" value="DALA_DALA_LIGASE_2"/>
    <property type="match status" value="1"/>
</dbReference>